<name>RLUA_VIBPA</name>
<feature type="chain" id="PRO_0000162661" description="Dual-specificity RNA pseudouridine synthase RluA">
    <location>
        <begin position="1"/>
        <end position="250"/>
    </location>
</feature>
<feature type="active site" evidence="1">
    <location>
        <position position="64"/>
    </location>
</feature>
<gene>
    <name type="primary">rluA</name>
    <name type="ordered locus">VP2679</name>
</gene>
<sequence>MAMLEYNPPTDPWTDIVFEDDHILAVNKPSGLLSVPGRLAEHHDSMWSRLQEEYPDIQVVHRLDMSTSGLMVLAKNKRAESALKKQFQFRLTHKIYYARVWGHVEQEEGEIDLPLICDWPNRPLQKVCFEDGKPSKTLFQVAKREEQEDGTKTTIVRLLPITGRSHQLRVHMQALGHPIVGDEFYATEEAKVFSERLELHASELSFYHPKSHWLRSIFVPCDFYPEAEEMIFDYFDPERKLPDYKTLPRP</sequence>
<comment type="function">
    <text evidence="1">Dual specificity enzyme that catalyzes the synthesis of pseudouridine from uracil-746 in 23S ribosomal RNA and from uracil-32 in the anticodon stem and loop of transfer RNAs.</text>
</comment>
<comment type="catalytic activity">
    <reaction evidence="1">
        <text>uridine(32) in tRNA = pseudouridine(32) in tRNA</text>
        <dbReference type="Rhea" id="RHEA:42544"/>
        <dbReference type="Rhea" id="RHEA-COMP:10107"/>
        <dbReference type="Rhea" id="RHEA-COMP:10108"/>
        <dbReference type="ChEBI" id="CHEBI:65314"/>
        <dbReference type="ChEBI" id="CHEBI:65315"/>
        <dbReference type="EC" id="5.4.99.28"/>
    </reaction>
</comment>
<comment type="catalytic activity">
    <reaction evidence="1">
        <text>uridine(746) in 23S rRNA = pseudouridine(746) in 23S rRNA</text>
        <dbReference type="Rhea" id="RHEA:42548"/>
        <dbReference type="Rhea" id="RHEA-COMP:10109"/>
        <dbReference type="Rhea" id="RHEA-COMP:10110"/>
        <dbReference type="ChEBI" id="CHEBI:65314"/>
        <dbReference type="ChEBI" id="CHEBI:65315"/>
        <dbReference type="EC" id="5.4.99.29"/>
    </reaction>
</comment>
<comment type="similarity">
    <text evidence="2">Belongs to the pseudouridine synthase RluA family.</text>
</comment>
<evidence type="ECO:0000250" key="1">
    <source>
        <dbReference type="UniProtKB" id="P0AA37"/>
    </source>
</evidence>
<evidence type="ECO:0000305" key="2"/>
<reference key="1">
    <citation type="journal article" date="2003" name="Lancet">
        <title>Genome sequence of Vibrio parahaemolyticus: a pathogenic mechanism distinct from that of V. cholerae.</title>
        <authorList>
            <person name="Makino K."/>
            <person name="Oshima K."/>
            <person name="Kurokawa K."/>
            <person name="Yokoyama K."/>
            <person name="Uda T."/>
            <person name="Tagomori K."/>
            <person name="Iijima Y."/>
            <person name="Najima M."/>
            <person name="Nakano M."/>
            <person name="Yamashita A."/>
            <person name="Kubota Y."/>
            <person name="Kimura S."/>
            <person name="Yasunaga T."/>
            <person name="Honda T."/>
            <person name="Shinagawa H."/>
            <person name="Hattori M."/>
            <person name="Iida T."/>
        </authorList>
    </citation>
    <scope>NUCLEOTIDE SEQUENCE [LARGE SCALE GENOMIC DNA]</scope>
    <source>
        <strain>RIMD 2210633</strain>
    </source>
</reference>
<protein>
    <recommendedName>
        <fullName evidence="1">Dual-specificity RNA pseudouridine synthase RluA</fullName>
        <ecNumber evidence="1">5.4.99.28</ecNumber>
        <ecNumber evidence="1">5.4.99.29</ecNumber>
    </recommendedName>
    <alternativeName>
        <fullName evidence="1">23S rRNA pseudouridine(746) synthase</fullName>
    </alternativeName>
    <alternativeName>
        <fullName evidence="1">Ribosomal large subunit pseudouridine synthase A</fullName>
    </alternativeName>
    <alternativeName>
        <fullName evidence="1">rRNA pseudouridylate synthase A</fullName>
    </alternativeName>
    <alternativeName>
        <fullName evidence="1">rRNA-uridine isomerase A</fullName>
    </alternativeName>
    <alternativeName>
        <fullName evidence="1">tRNA pseudouridine(32) synthase</fullName>
    </alternativeName>
</protein>
<proteinExistence type="inferred from homology"/>
<accession>Q87LD3</accession>
<dbReference type="EC" id="5.4.99.28" evidence="1"/>
<dbReference type="EC" id="5.4.99.29" evidence="1"/>
<dbReference type="EMBL" id="BA000031">
    <property type="protein sequence ID" value="BAC60942.1"/>
    <property type="molecule type" value="Genomic_DNA"/>
</dbReference>
<dbReference type="RefSeq" id="NP_799058.1">
    <property type="nucleotide sequence ID" value="NC_004603.1"/>
</dbReference>
<dbReference type="RefSeq" id="WP_005478830.1">
    <property type="nucleotide sequence ID" value="NC_004603.1"/>
</dbReference>
<dbReference type="SMR" id="Q87LD3"/>
<dbReference type="GeneID" id="1190224"/>
<dbReference type="KEGG" id="vpa:VP2679"/>
<dbReference type="PATRIC" id="fig|223926.6.peg.2574"/>
<dbReference type="eggNOG" id="COG0564">
    <property type="taxonomic scope" value="Bacteria"/>
</dbReference>
<dbReference type="HOGENOM" id="CLU_016902_11_1_6"/>
<dbReference type="Proteomes" id="UP000002493">
    <property type="component" value="Chromosome 1"/>
</dbReference>
<dbReference type="GO" id="GO:0160142">
    <property type="term" value="F:23S rRNA pseudouridine(746) synthase activity"/>
    <property type="evidence" value="ECO:0007669"/>
    <property type="project" value="UniProtKB-EC"/>
</dbReference>
<dbReference type="GO" id="GO:0003723">
    <property type="term" value="F:RNA binding"/>
    <property type="evidence" value="ECO:0007669"/>
    <property type="project" value="InterPro"/>
</dbReference>
<dbReference type="GO" id="GO:0160151">
    <property type="term" value="F:tRNA pseudouridine(32) synthase activity"/>
    <property type="evidence" value="ECO:0007669"/>
    <property type="project" value="UniProtKB-EC"/>
</dbReference>
<dbReference type="GO" id="GO:0000455">
    <property type="term" value="P:enzyme-directed rRNA pseudouridine synthesis"/>
    <property type="evidence" value="ECO:0007669"/>
    <property type="project" value="TreeGrafter"/>
</dbReference>
<dbReference type="GO" id="GO:0008033">
    <property type="term" value="P:tRNA processing"/>
    <property type="evidence" value="ECO:0007669"/>
    <property type="project" value="UniProtKB-KW"/>
</dbReference>
<dbReference type="CDD" id="cd02869">
    <property type="entry name" value="PseudoU_synth_RluA_like"/>
    <property type="match status" value="1"/>
</dbReference>
<dbReference type="FunFam" id="3.30.2350.10:FF:000005">
    <property type="entry name" value="Pseudouridine synthase"/>
    <property type="match status" value="1"/>
</dbReference>
<dbReference type="Gene3D" id="3.30.2350.10">
    <property type="entry name" value="Pseudouridine synthase"/>
    <property type="match status" value="1"/>
</dbReference>
<dbReference type="InterPro" id="IPR020103">
    <property type="entry name" value="PsdUridine_synth_cat_dom_sf"/>
</dbReference>
<dbReference type="InterPro" id="IPR006224">
    <property type="entry name" value="PsdUridine_synth_RluA-like_CS"/>
</dbReference>
<dbReference type="InterPro" id="IPR006225">
    <property type="entry name" value="PsdUridine_synth_RluC/D"/>
</dbReference>
<dbReference type="InterPro" id="IPR006145">
    <property type="entry name" value="PsdUridine_synth_RsuA/RluA"/>
</dbReference>
<dbReference type="InterPro" id="IPR050188">
    <property type="entry name" value="RluA_PseudoU_synthase"/>
</dbReference>
<dbReference type="NCBIfam" id="NF007543">
    <property type="entry name" value="PRK10158.1"/>
    <property type="match status" value="1"/>
</dbReference>
<dbReference type="NCBIfam" id="TIGR00005">
    <property type="entry name" value="rluA_subfam"/>
    <property type="match status" value="1"/>
</dbReference>
<dbReference type="PANTHER" id="PTHR21600:SF91">
    <property type="entry name" value="DUAL-SPECIFICITY RNA PSEUDOURIDINE SYNTHASE RLUA"/>
    <property type="match status" value="1"/>
</dbReference>
<dbReference type="PANTHER" id="PTHR21600">
    <property type="entry name" value="MITOCHONDRIAL RNA PSEUDOURIDINE SYNTHASE"/>
    <property type="match status" value="1"/>
</dbReference>
<dbReference type="Pfam" id="PF00849">
    <property type="entry name" value="PseudoU_synth_2"/>
    <property type="match status" value="1"/>
</dbReference>
<dbReference type="SUPFAM" id="SSF55120">
    <property type="entry name" value="Pseudouridine synthase"/>
    <property type="match status" value="1"/>
</dbReference>
<dbReference type="PROSITE" id="PS01129">
    <property type="entry name" value="PSI_RLU"/>
    <property type="match status" value="1"/>
</dbReference>
<organism>
    <name type="scientific">Vibrio parahaemolyticus serotype O3:K6 (strain RIMD 2210633)</name>
    <dbReference type="NCBI Taxonomy" id="223926"/>
    <lineage>
        <taxon>Bacteria</taxon>
        <taxon>Pseudomonadati</taxon>
        <taxon>Pseudomonadota</taxon>
        <taxon>Gammaproteobacteria</taxon>
        <taxon>Vibrionales</taxon>
        <taxon>Vibrionaceae</taxon>
        <taxon>Vibrio</taxon>
    </lineage>
</organism>
<keyword id="KW-0413">Isomerase</keyword>
<keyword id="KW-0698">rRNA processing</keyword>
<keyword id="KW-0819">tRNA processing</keyword>